<accession>A8H8M0</accession>
<organism>
    <name type="scientific">Shewanella pealeana (strain ATCC 700345 / ANG-SQ1)</name>
    <dbReference type="NCBI Taxonomy" id="398579"/>
    <lineage>
        <taxon>Bacteria</taxon>
        <taxon>Pseudomonadati</taxon>
        <taxon>Pseudomonadota</taxon>
        <taxon>Gammaproteobacteria</taxon>
        <taxon>Alteromonadales</taxon>
        <taxon>Shewanellaceae</taxon>
        <taxon>Shewanella</taxon>
    </lineage>
</organism>
<proteinExistence type="inferred from homology"/>
<dbReference type="EMBL" id="CP000851">
    <property type="protein sequence ID" value="ABV88907.1"/>
    <property type="molecule type" value="Genomic_DNA"/>
</dbReference>
<dbReference type="RefSeq" id="WP_012156791.1">
    <property type="nucleotide sequence ID" value="NC_009901.1"/>
</dbReference>
<dbReference type="SMR" id="A8H8M0"/>
<dbReference type="STRING" id="398579.Spea_3594"/>
<dbReference type="KEGG" id="spl:Spea_3594"/>
<dbReference type="eggNOG" id="COG0103">
    <property type="taxonomic scope" value="Bacteria"/>
</dbReference>
<dbReference type="HOGENOM" id="CLU_046483_2_1_6"/>
<dbReference type="OrthoDB" id="9803965at2"/>
<dbReference type="Proteomes" id="UP000002608">
    <property type="component" value="Chromosome"/>
</dbReference>
<dbReference type="GO" id="GO:0022627">
    <property type="term" value="C:cytosolic small ribosomal subunit"/>
    <property type="evidence" value="ECO:0007669"/>
    <property type="project" value="TreeGrafter"/>
</dbReference>
<dbReference type="GO" id="GO:0003723">
    <property type="term" value="F:RNA binding"/>
    <property type="evidence" value="ECO:0007669"/>
    <property type="project" value="TreeGrafter"/>
</dbReference>
<dbReference type="GO" id="GO:0003735">
    <property type="term" value="F:structural constituent of ribosome"/>
    <property type="evidence" value="ECO:0007669"/>
    <property type="project" value="InterPro"/>
</dbReference>
<dbReference type="GO" id="GO:0006412">
    <property type="term" value="P:translation"/>
    <property type="evidence" value="ECO:0007669"/>
    <property type="project" value="UniProtKB-UniRule"/>
</dbReference>
<dbReference type="FunFam" id="3.30.230.10:FF:000001">
    <property type="entry name" value="30S ribosomal protein S9"/>
    <property type="match status" value="1"/>
</dbReference>
<dbReference type="Gene3D" id="3.30.230.10">
    <property type="match status" value="1"/>
</dbReference>
<dbReference type="HAMAP" id="MF_00532_B">
    <property type="entry name" value="Ribosomal_uS9_B"/>
    <property type="match status" value="1"/>
</dbReference>
<dbReference type="InterPro" id="IPR020568">
    <property type="entry name" value="Ribosomal_Su5_D2-typ_SF"/>
</dbReference>
<dbReference type="InterPro" id="IPR000754">
    <property type="entry name" value="Ribosomal_uS9"/>
</dbReference>
<dbReference type="InterPro" id="IPR023035">
    <property type="entry name" value="Ribosomal_uS9_bac/plastid"/>
</dbReference>
<dbReference type="InterPro" id="IPR020574">
    <property type="entry name" value="Ribosomal_uS9_CS"/>
</dbReference>
<dbReference type="InterPro" id="IPR014721">
    <property type="entry name" value="Ribsml_uS5_D2-typ_fold_subgr"/>
</dbReference>
<dbReference type="NCBIfam" id="NF001099">
    <property type="entry name" value="PRK00132.1"/>
    <property type="match status" value="1"/>
</dbReference>
<dbReference type="PANTHER" id="PTHR21569">
    <property type="entry name" value="RIBOSOMAL PROTEIN S9"/>
    <property type="match status" value="1"/>
</dbReference>
<dbReference type="PANTHER" id="PTHR21569:SF1">
    <property type="entry name" value="SMALL RIBOSOMAL SUBUNIT PROTEIN US9M"/>
    <property type="match status" value="1"/>
</dbReference>
<dbReference type="Pfam" id="PF00380">
    <property type="entry name" value="Ribosomal_S9"/>
    <property type="match status" value="1"/>
</dbReference>
<dbReference type="SUPFAM" id="SSF54211">
    <property type="entry name" value="Ribosomal protein S5 domain 2-like"/>
    <property type="match status" value="1"/>
</dbReference>
<dbReference type="PROSITE" id="PS00360">
    <property type="entry name" value="RIBOSOMAL_S9"/>
    <property type="match status" value="1"/>
</dbReference>
<protein>
    <recommendedName>
        <fullName evidence="1">Small ribosomal subunit protein uS9</fullName>
    </recommendedName>
    <alternativeName>
        <fullName evidence="2">30S ribosomal protein S9</fullName>
    </alternativeName>
</protein>
<comment type="similarity">
    <text evidence="1">Belongs to the universal ribosomal protein uS9 family.</text>
</comment>
<evidence type="ECO:0000255" key="1">
    <source>
        <dbReference type="HAMAP-Rule" id="MF_00532"/>
    </source>
</evidence>
<evidence type="ECO:0000305" key="2"/>
<sequence>MAATQYYGTGRRKTSTARVFAKVGTGNIIVNKLPLDEYFGRETSRMVVRQPLELVEMTEKLDIMVTVKGGGNTGQAGAIRHGITRALMELDESLRPSLRAAGFVTRDARKVERKKVGLRKARRKPQFSKR</sequence>
<reference key="1">
    <citation type="submission" date="2007-10" db="EMBL/GenBank/DDBJ databases">
        <title>Complete sequence of Shewanella pealeana ATCC 700345.</title>
        <authorList>
            <consortium name="US DOE Joint Genome Institute"/>
            <person name="Copeland A."/>
            <person name="Lucas S."/>
            <person name="Lapidus A."/>
            <person name="Barry K."/>
            <person name="Glavina del Rio T."/>
            <person name="Dalin E."/>
            <person name="Tice H."/>
            <person name="Pitluck S."/>
            <person name="Chertkov O."/>
            <person name="Brettin T."/>
            <person name="Bruce D."/>
            <person name="Detter J.C."/>
            <person name="Han C."/>
            <person name="Schmutz J."/>
            <person name="Larimer F."/>
            <person name="Land M."/>
            <person name="Hauser L."/>
            <person name="Kyrpides N."/>
            <person name="Kim E."/>
            <person name="Zhao J.-S.Z."/>
            <person name="Manno D."/>
            <person name="Hawari J."/>
            <person name="Richardson P."/>
        </authorList>
    </citation>
    <scope>NUCLEOTIDE SEQUENCE [LARGE SCALE GENOMIC DNA]</scope>
    <source>
        <strain>ATCC 700345 / ANG-SQ1</strain>
    </source>
</reference>
<gene>
    <name evidence="1" type="primary">rpsI</name>
    <name type="ordered locus">Spea_3594</name>
</gene>
<name>RS9_SHEPA</name>
<keyword id="KW-1185">Reference proteome</keyword>
<keyword id="KW-0687">Ribonucleoprotein</keyword>
<keyword id="KW-0689">Ribosomal protein</keyword>
<feature type="chain" id="PRO_1000081835" description="Small ribosomal subunit protein uS9">
    <location>
        <begin position="1"/>
        <end position="130"/>
    </location>
</feature>